<proteinExistence type="inferred from homology"/>
<evidence type="ECO:0000255" key="1">
    <source>
        <dbReference type="HAMAP-Rule" id="MF_01393"/>
    </source>
</evidence>
<keyword id="KW-0066">ATP synthesis</keyword>
<keyword id="KW-1003">Cell membrane</keyword>
<keyword id="KW-0138">CF(0)</keyword>
<keyword id="KW-0375">Hydrogen ion transport</keyword>
<keyword id="KW-0406">Ion transport</keyword>
<keyword id="KW-0472">Membrane</keyword>
<keyword id="KW-0812">Transmembrane</keyword>
<keyword id="KW-1133">Transmembrane helix</keyword>
<keyword id="KW-0813">Transport</keyword>
<gene>
    <name evidence="1" type="primary">atpB</name>
    <name type="ordered locus">Aflv_2708</name>
</gene>
<name>ATP6_ANOFW</name>
<accession>B7GMF9</accession>
<comment type="function">
    <text evidence="1">Key component of the proton channel; it plays a direct role in the translocation of protons across the membrane.</text>
</comment>
<comment type="subunit">
    <text evidence="1">F-type ATPases have 2 components, CF(1) - the catalytic core - and CF(0) - the membrane proton channel. CF(1) has five subunits: alpha(3), beta(3), gamma(1), delta(1), epsilon(1). CF(0) has three main subunits: a(1), b(2) and c(9-12). The alpha and beta chains form an alternating ring which encloses part of the gamma chain. CF(1) is attached to CF(0) by a central stalk formed by the gamma and epsilon chains, while a peripheral stalk is formed by the delta and b chains.</text>
</comment>
<comment type="subcellular location">
    <subcellularLocation>
        <location evidence="1">Cell membrane</location>
        <topology evidence="1">Multi-pass membrane protein</topology>
    </subcellularLocation>
</comment>
<comment type="similarity">
    <text evidence="1">Belongs to the ATPase A chain family.</text>
</comment>
<organism>
    <name type="scientific">Anoxybacillus flavithermus (strain DSM 21510 / WK1)</name>
    <dbReference type="NCBI Taxonomy" id="491915"/>
    <lineage>
        <taxon>Bacteria</taxon>
        <taxon>Bacillati</taxon>
        <taxon>Bacillota</taxon>
        <taxon>Bacilli</taxon>
        <taxon>Bacillales</taxon>
        <taxon>Anoxybacillaceae</taxon>
        <taxon>Anoxybacillus</taxon>
    </lineage>
</organism>
<protein>
    <recommendedName>
        <fullName evidence="1">ATP synthase subunit a</fullName>
    </recommendedName>
    <alternativeName>
        <fullName evidence="1">ATP synthase F0 sector subunit a</fullName>
    </alternativeName>
    <alternativeName>
        <fullName evidence="1">F-ATPase subunit 6</fullName>
    </alternativeName>
</protein>
<feature type="chain" id="PRO_1000145255" description="ATP synthase subunit a">
    <location>
        <begin position="1"/>
        <end position="236"/>
    </location>
</feature>
<feature type="transmembrane region" description="Helical" evidence="1">
    <location>
        <begin position="17"/>
        <end position="37"/>
    </location>
</feature>
<feature type="transmembrane region" description="Helical" evidence="1">
    <location>
        <begin position="80"/>
        <end position="100"/>
    </location>
</feature>
<feature type="transmembrane region" description="Helical" evidence="1">
    <location>
        <begin position="114"/>
        <end position="134"/>
    </location>
</feature>
<feature type="transmembrane region" description="Helical" evidence="1">
    <location>
        <begin position="179"/>
        <end position="199"/>
    </location>
</feature>
<feature type="transmembrane region" description="Helical" evidence="1">
    <location>
        <begin position="208"/>
        <end position="228"/>
    </location>
</feature>
<dbReference type="EMBL" id="CP000922">
    <property type="protein sequence ID" value="ACJ35061.1"/>
    <property type="molecule type" value="Genomic_DNA"/>
</dbReference>
<dbReference type="RefSeq" id="WP_012576188.1">
    <property type="nucleotide sequence ID" value="NC_011567.1"/>
</dbReference>
<dbReference type="SMR" id="B7GMF9"/>
<dbReference type="STRING" id="491915.Aflv_2708"/>
<dbReference type="GeneID" id="7038981"/>
<dbReference type="KEGG" id="afl:Aflv_2708"/>
<dbReference type="PATRIC" id="fig|491915.6.peg.2791"/>
<dbReference type="eggNOG" id="COG0356">
    <property type="taxonomic scope" value="Bacteria"/>
</dbReference>
<dbReference type="HOGENOM" id="CLU_041018_2_3_9"/>
<dbReference type="Proteomes" id="UP000000742">
    <property type="component" value="Chromosome"/>
</dbReference>
<dbReference type="GO" id="GO:0005886">
    <property type="term" value="C:plasma membrane"/>
    <property type="evidence" value="ECO:0007669"/>
    <property type="project" value="UniProtKB-SubCell"/>
</dbReference>
<dbReference type="GO" id="GO:0045259">
    <property type="term" value="C:proton-transporting ATP synthase complex"/>
    <property type="evidence" value="ECO:0007669"/>
    <property type="project" value="UniProtKB-KW"/>
</dbReference>
<dbReference type="GO" id="GO:0046933">
    <property type="term" value="F:proton-transporting ATP synthase activity, rotational mechanism"/>
    <property type="evidence" value="ECO:0007669"/>
    <property type="project" value="UniProtKB-UniRule"/>
</dbReference>
<dbReference type="GO" id="GO:0042777">
    <property type="term" value="P:proton motive force-driven plasma membrane ATP synthesis"/>
    <property type="evidence" value="ECO:0007669"/>
    <property type="project" value="TreeGrafter"/>
</dbReference>
<dbReference type="CDD" id="cd00310">
    <property type="entry name" value="ATP-synt_Fo_a_6"/>
    <property type="match status" value="1"/>
</dbReference>
<dbReference type="FunFam" id="1.20.120.220:FF:000005">
    <property type="entry name" value="ATP synthase subunit a"/>
    <property type="match status" value="1"/>
</dbReference>
<dbReference type="Gene3D" id="1.20.120.220">
    <property type="entry name" value="ATP synthase, F0 complex, subunit A"/>
    <property type="match status" value="1"/>
</dbReference>
<dbReference type="HAMAP" id="MF_01393">
    <property type="entry name" value="ATP_synth_a_bact"/>
    <property type="match status" value="1"/>
</dbReference>
<dbReference type="InterPro" id="IPR045082">
    <property type="entry name" value="ATP_syn_F0_a_bact/chloroplast"/>
</dbReference>
<dbReference type="InterPro" id="IPR000568">
    <property type="entry name" value="ATP_synth_F0_asu"/>
</dbReference>
<dbReference type="InterPro" id="IPR023011">
    <property type="entry name" value="ATP_synth_F0_asu_AS"/>
</dbReference>
<dbReference type="InterPro" id="IPR035908">
    <property type="entry name" value="F0_ATP_A_sf"/>
</dbReference>
<dbReference type="NCBIfam" id="TIGR01131">
    <property type="entry name" value="ATP_synt_6_or_A"/>
    <property type="match status" value="1"/>
</dbReference>
<dbReference type="NCBIfam" id="NF004479">
    <property type="entry name" value="PRK05815.1-4"/>
    <property type="match status" value="1"/>
</dbReference>
<dbReference type="PANTHER" id="PTHR42823">
    <property type="entry name" value="ATP SYNTHASE SUBUNIT A, CHLOROPLASTIC"/>
    <property type="match status" value="1"/>
</dbReference>
<dbReference type="PANTHER" id="PTHR42823:SF3">
    <property type="entry name" value="ATP SYNTHASE SUBUNIT A, CHLOROPLASTIC"/>
    <property type="match status" value="1"/>
</dbReference>
<dbReference type="Pfam" id="PF00119">
    <property type="entry name" value="ATP-synt_A"/>
    <property type="match status" value="1"/>
</dbReference>
<dbReference type="PRINTS" id="PR00123">
    <property type="entry name" value="ATPASEA"/>
</dbReference>
<dbReference type="SUPFAM" id="SSF81336">
    <property type="entry name" value="F1F0 ATP synthase subunit A"/>
    <property type="match status" value="1"/>
</dbReference>
<dbReference type="PROSITE" id="PS00449">
    <property type="entry name" value="ATPASE_A"/>
    <property type="match status" value="1"/>
</dbReference>
<reference key="1">
    <citation type="journal article" date="2008" name="Genome Biol.">
        <title>Encapsulated in silica: genome, proteome and physiology of the thermophilic bacterium Anoxybacillus flavithermus WK1.</title>
        <authorList>
            <person name="Saw J.H."/>
            <person name="Mountain B.W."/>
            <person name="Feng L."/>
            <person name="Omelchenko M.V."/>
            <person name="Hou S."/>
            <person name="Saito J.A."/>
            <person name="Stott M.B."/>
            <person name="Li D."/>
            <person name="Zhao G."/>
            <person name="Wu J."/>
            <person name="Galperin M.Y."/>
            <person name="Koonin E.V."/>
            <person name="Makarova K.S."/>
            <person name="Wolf Y.I."/>
            <person name="Rigden D.J."/>
            <person name="Dunfield P.F."/>
            <person name="Wang L."/>
            <person name="Alam M."/>
        </authorList>
    </citation>
    <scope>NUCLEOTIDE SEQUENCE [LARGE SCALE GENOMIC DNA]</scope>
    <source>
        <strain>DSM 21510 / WK1</strain>
    </source>
</reference>
<sequence>MHHEAPLYTWFGLTFNLANVLMITVTSVIVFVIAVLATRNLAMKPTGMQNFLEWVMDFVKGIIKSNMDWKTGGRFHMLGMTLIMYIFVANMLGLPFSVVIDNKLWWKSPTADPVVTLTLATMVVALSHYYGIKLNGFKEYAKGFVSPMPILFPLKIIEEFANTLTLGLRLYGNIFAGEILLALLAGSLATGVGGTIAAIIPTIAWQGFSIFVGAIQAFIFTMLTMVYMAHKVSHDH</sequence>